<organism>
    <name type="scientific">Escherichia coli O6:K15:H31 (strain 536 / UPEC)</name>
    <dbReference type="NCBI Taxonomy" id="362663"/>
    <lineage>
        <taxon>Bacteria</taxon>
        <taxon>Pseudomonadati</taxon>
        <taxon>Pseudomonadota</taxon>
        <taxon>Gammaproteobacteria</taxon>
        <taxon>Enterobacterales</taxon>
        <taxon>Enterobacteriaceae</taxon>
        <taxon>Escherichia</taxon>
    </lineage>
</organism>
<dbReference type="EC" id="4.98.1.1" evidence="2"/>
<dbReference type="EC" id="1.11.1.-" evidence="2"/>
<dbReference type="EMBL" id="CP000247">
    <property type="protein sequence ID" value="ABG69031.1"/>
    <property type="molecule type" value="Genomic_DNA"/>
</dbReference>
<dbReference type="RefSeq" id="WP_001199132.1">
    <property type="nucleotide sequence ID" value="NC_008253.1"/>
</dbReference>
<dbReference type="SMR" id="Q0TJ48"/>
<dbReference type="PeroxiBase" id="5868">
    <property type="entry name" value="EcoDyPrx01_536"/>
</dbReference>
<dbReference type="KEGG" id="ecp:ECP_1018"/>
<dbReference type="HOGENOM" id="CLU_039488_0_0_6"/>
<dbReference type="Proteomes" id="UP000009182">
    <property type="component" value="Chromosome"/>
</dbReference>
<dbReference type="GO" id="GO:0005829">
    <property type="term" value="C:cytosol"/>
    <property type="evidence" value="ECO:0007669"/>
    <property type="project" value="TreeGrafter"/>
</dbReference>
<dbReference type="GO" id="GO:0042597">
    <property type="term" value="C:periplasmic space"/>
    <property type="evidence" value="ECO:0007669"/>
    <property type="project" value="UniProtKB-SubCell"/>
</dbReference>
<dbReference type="GO" id="GO:0004325">
    <property type="term" value="F:ferrochelatase activity"/>
    <property type="evidence" value="ECO:0007669"/>
    <property type="project" value="RHEA"/>
</dbReference>
<dbReference type="GO" id="GO:0020037">
    <property type="term" value="F:heme binding"/>
    <property type="evidence" value="ECO:0007669"/>
    <property type="project" value="InterPro"/>
</dbReference>
<dbReference type="GO" id="GO:0046872">
    <property type="term" value="F:metal ion binding"/>
    <property type="evidence" value="ECO:0007669"/>
    <property type="project" value="UniProtKB-KW"/>
</dbReference>
<dbReference type="GO" id="GO:0004601">
    <property type="term" value="F:peroxidase activity"/>
    <property type="evidence" value="ECO:0007669"/>
    <property type="project" value="UniProtKB-KW"/>
</dbReference>
<dbReference type="GO" id="GO:0033212">
    <property type="term" value="P:iron import into cell"/>
    <property type="evidence" value="ECO:0007669"/>
    <property type="project" value="InterPro"/>
</dbReference>
<dbReference type="InterPro" id="IPR011008">
    <property type="entry name" value="Dimeric_a/b-barrel"/>
</dbReference>
<dbReference type="InterPro" id="IPR048328">
    <property type="entry name" value="Dyp_perox_C"/>
</dbReference>
<dbReference type="InterPro" id="IPR048327">
    <property type="entry name" value="Dyp_perox_N"/>
</dbReference>
<dbReference type="InterPro" id="IPR006314">
    <property type="entry name" value="Dyp_peroxidase"/>
</dbReference>
<dbReference type="InterPro" id="IPR006313">
    <property type="entry name" value="EfeB/EfeN"/>
</dbReference>
<dbReference type="InterPro" id="IPR006311">
    <property type="entry name" value="TAT_signal"/>
</dbReference>
<dbReference type="NCBIfam" id="TIGR01413">
    <property type="entry name" value="Dyp_perox_fam"/>
    <property type="match status" value="1"/>
</dbReference>
<dbReference type="NCBIfam" id="TIGR01412">
    <property type="entry name" value="tat_substr_1"/>
    <property type="match status" value="1"/>
</dbReference>
<dbReference type="PANTHER" id="PTHR30521:SF4">
    <property type="entry name" value="DEFERROCHELATASE"/>
    <property type="match status" value="1"/>
</dbReference>
<dbReference type="PANTHER" id="PTHR30521">
    <property type="entry name" value="DEFERROCHELATASE/PEROXIDASE"/>
    <property type="match status" value="1"/>
</dbReference>
<dbReference type="Pfam" id="PF20628">
    <property type="entry name" value="Dyp_perox_C"/>
    <property type="match status" value="1"/>
</dbReference>
<dbReference type="Pfam" id="PF04261">
    <property type="entry name" value="Dyp_perox_N"/>
    <property type="match status" value="1"/>
</dbReference>
<dbReference type="SUPFAM" id="SSF54909">
    <property type="entry name" value="Dimeric alpha+beta barrel"/>
    <property type="match status" value="1"/>
</dbReference>
<dbReference type="PROSITE" id="PS51404">
    <property type="entry name" value="DYP_PEROXIDASE"/>
    <property type="match status" value="1"/>
</dbReference>
<dbReference type="PROSITE" id="PS51318">
    <property type="entry name" value="TAT"/>
    <property type="match status" value="1"/>
</dbReference>
<feature type="signal peptide" description="Tat-type signal" evidence="3">
    <location>
        <begin position="1"/>
        <end position="35"/>
    </location>
</feature>
<feature type="chain" id="PRO_0000278546" description="Deferrochelatase">
    <location>
        <begin position="36"/>
        <end position="423"/>
    </location>
</feature>
<feature type="binding site" evidence="2">
    <location>
        <begin position="236"/>
        <end position="238"/>
    </location>
    <ligand>
        <name>heme b</name>
        <dbReference type="ChEBI" id="CHEBI:60344"/>
    </ligand>
</feature>
<feature type="binding site" description="proximal binding residue" evidence="2">
    <location>
        <position position="329"/>
    </location>
    <ligand>
        <name>heme b</name>
        <dbReference type="ChEBI" id="CHEBI:60344"/>
    </ligand>
    <ligandPart>
        <name>Fe</name>
        <dbReference type="ChEBI" id="CHEBI:18248"/>
    </ligandPart>
</feature>
<feature type="binding site" evidence="2">
    <location>
        <begin position="334"/>
        <end position="336"/>
    </location>
    <ligand>
        <name>heme b</name>
        <dbReference type="ChEBI" id="CHEBI:60344"/>
    </ligand>
</feature>
<feature type="binding site" evidence="2">
    <location>
        <position position="347"/>
    </location>
    <ligand>
        <name>heme b</name>
        <dbReference type="ChEBI" id="CHEBI:60344"/>
    </ligand>
</feature>
<name>EFEB_ECOL5</name>
<keyword id="KW-0349">Heme</keyword>
<keyword id="KW-0408">Iron</keyword>
<keyword id="KW-0456">Lyase</keyword>
<keyword id="KW-0479">Metal-binding</keyword>
<keyword id="KW-0560">Oxidoreductase</keyword>
<keyword id="KW-0574">Periplasm</keyword>
<keyword id="KW-0575">Peroxidase</keyword>
<keyword id="KW-0732">Signal</keyword>
<evidence type="ECO:0000250" key="1"/>
<evidence type="ECO:0000250" key="2">
    <source>
        <dbReference type="UniProtKB" id="P31545"/>
    </source>
</evidence>
<evidence type="ECO:0000255" key="3">
    <source>
        <dbReference type="PROSITE-ProRule" id="PRU00648"/>
    </source>
</evidence>
<evidence type="ECO:0000305" key="4"/>
<accession>Q0TJ48</accession>
<protein>
    <recommendedName>
        <fullName>Deferrochelatase</fullName>
        <ecNumber evidence="2">4.98.1.1</ecNumber>
    </recommendedName>
    <alternativeName>
        <fullName>Peroxidase EfeB</fullName>
        <ecNumber evidence="2">1.11.1.-</ecNumber>
    </alternativeName>
</protein>
<sequence>MQYEDENGVNEPSRRRLLKGIGALALAGSCPVAHAQKTQSAPGTLSPDARNEKQPFYGEHQAGILTPQQAAMMLVAFDVLASDKADLERLFRLLTQRFAFLTQGGAAPETPNPRLPPLDSGILGGYIAPDNLTITLSVGHSLFDERFGLAPQMPKKLQKMTRFPNDSLDAALCHGDVLLQICANTQDTVIHALRDIIKHTPDLLSVRWKREGFISDHAARSKGKETPINLLGFKDGTANPDSQNAKLMQKVVWVTADQQEPAWTIGGSYQAVRLIQFRVEFWDRTPLKEQQTIFGRDKQTGAPLGMLHEHDVPDYASDPEGKVIALDSHIRLANPRTAESESSLMLRRGYSYSLGVTNSGQLDMGLLFVCYQHDLEKGFLTVQKRLNGEALEEYVKPIGGGYFFALPGVKDANDYLGSALLRV</sequence>
<gene>
    <name type="primary">efeB</name>
    <name type="ordered locus">ECP_1018</name>
</gene>
<proteinExistence type="inferred from homology"/>
<reference key="1">
    <citation type="journal article" date="2006" name="Mol. Microbiol.">
        <title>Role of pathogenicity island-associated integrases in the genome plasticity of uropathogenic Escherichia coli strain 536.</title>
        <authorList>
            <person name="Hochhut B."/>
            <person name="Wilde C."/>
            <person name="Balling G."/>
            <person name="Middendorf B."/>
            <person name="Dobrindt U."/>
            <person name="Brzuszkiewicz E."/>
            <person name="Gottschalk G."/>
            <person name="Carniel E."/>
            <person name="Hacker J."/>
        </authorList>
    </citation>
    <scope>NUCLEOTIDE SEQUENCE [LARGE SCALE GENOMIC DNA]</scope>
    <source>
        <strain>536 / UPEC</strain>
    </source>
</reference>
<comment type="function">
    <text evidence="2">Involved in the recovery of exogenous heme iron. Extracts iron from heme while preserving the protoporphyrin ring intact.</text>
</comment>
<comment type="catalytic activity">
    <reaction evidence="2">
        <text>heme b + 2 H(+) = protoporphyrin IX + Fe(2+)</text>
        <dbReference type="Rhea" id="RHEA:22584"/>
        <dbReference type="ChEBI" id="CHEBI:15378"/>
        <dbReference type="ChEBI" id="CHEBI:29033"/>
        <dbReference type="ChEBI" id="CHEBI:57306"/>
        <dbReference type="ChEBI" id="CHEBI:60344"/>
        <dbReference type="EC" id="4.98.1.1"/>
    </reaction>
    <physiologicalReaction direction="left-to-right" evidence="2">
        <dbReference type="Rhea" id="RHEA:22585"/>
    </physiologicalReaction>
</comment>
<comment type="cofactor">
    <cofactor evidence="1">
        <name>heme b</name>
        <dbReference type="ChEBI" id="CHEBI:60344"/>
    </cofactor>
    <text evidence="1">Binds 1 heme b (iron(II)-protoporphyrin IX) group non-covalently per subunit.</text>
</comment>
<comment type="subunit">
    <text evidence="1">Homodimer. Part of a ferrous iron transporter composed of EfeU, EfeO and EfeB (By similarity).</text>
</comment>
<comment type="subcellular location">
    <subcellularLocation>
        <location evidence="1">Periplasm</location>
    </subcellularLocation>
</comment>
<comment type="PTM">
    <text>Predicted to be exported by the Tat system. The position of the signal peptide cleavage has not been experimentally proven.</text>
</comment>
<comment type="similarity">
    <text evidence="4">Belongs to the DyP-type peroxidase family. EfeB subfamily.</text>
</comment>